<proteinExistence type="evidence at protein level"/>
<sequence>MASSSPILLMIIFSMWLLISHSESTDYLIGDSHNSWKVPLPSRRAFARWASAHEFTVGDTILFEYDNETESVHEVNEHDYIMCHTNGEHVEHHDGNTKVVLDKIGVYHFISGTKRHCKMGLKLAVVVQNKHDLVLPPLITMPMPPSPSPSPNSSGNKGGAAGLGFIMWLGVSLVMMMFLI</sequence>
<gene>
    <name evidence="6" type="primary">ENOD16</name>
</gene>
<protein>
    <recommendedName>
        <fullName evidence="6">Early nodulin-16</fullName>
        <shortName evidence="6">N-16</shortName>
    </recommendedName>
</protein>
<accession>P93328</accession>
<organism>
    <name type="scientific">Medicago truncatula</name>
    <name type="common">Barrel medic</name>
    <name type="synonym">Medicago tribuloides</name>
    <dbReference type="NCBI Taxonomy" id="3880"/>
    <lineage>
        <taxon>Eukaryota</taxon>
        <taxon>Viridiplantae</taxon>
        <taxon>Streptophyta</taxon>
        <taxon>Embryophyta</taxon>
        <taxon>Tracheophyta</taxon>
        <taxon>Spermatophyta</taxon>
        <taxon>Magnoliopsida</taxon>
        <taxon>eudicotyledons</taxon>
        <taxon>Gunneridae</taxon>
        <taxon>Pentapetalae</taxon>
        <taxon>rosids</taxon>
        <taxon>fabids</taxon>
        <taxon>Fabales</taxon>
        <taxon>Fabaceae</taxon>
        <taxon>Papilionoideae</taxon>
        <taxon>50 kb inversion clade</taxon>
        <taxon>NPAAA clade</taxon>
        <taxon>Hologalegina</taxon>
        <taxon>IRL clade</taxon>
        <taxon>Trifolieae</taxon>
        <taxon>Medicago</taxon>
    </lineage>
</organism>
<name>NO16_MEDTR</name>
<feature type="signal peptide" evidence="1">
    <location>
        <begin position="1"/>
        <end position="22"/>
    </location>
</feature>
<feature type="chain" id="PRO_0000002876" description="Early nodulin-16">
    <location>
        <begin position="23"/>
        <end position="154"/>
    </location>
</feature>
<feature type="propeptide" id="PRO_0000457727" description="Removed in mature form" evidence="1">
    <location>
        <begin position="155"/>
        <end position="180"/>
    </location>
</feature>
<feature type="domain" description="Phytocyanin" evidence="3">
    <location>
        <begin position="25"/>
        <end position="129"/>
    </location>
</feature>
<feature type="lipid moiety-binding region" description="GPI-anchor amidated serine" evidence="1">
    <location>
        <position position="154"/>
    </location>
</feature>
<feature type="glycosylation site" description="N-linked (GlcNAc...) asparagine" evidence="2">
    <location>
        <position position="67"/>
    </location>
</feature>
<feature type="glycosylation site" description="N-linked (GlcNAc...) asparagine" evidence="2">
    <location>
        <position position="152"/>
    </location>
</feature>
<feature type="disulfide bond" evidence="3">
    <location>
        <begin position="83"/>
        <end position="117"/>
    </location>
</feature>
<keyword id="KW-1003">Cell membrane</keyword>
<keyword id="KW-1015">Disulfide bond</keyword>
<keyword id="KW-0325">Glycoprotein</keyword>
<keyword id="KW-0336">GPI-anchor</keyword>
<keyword id="KW-0449">Lipoprotein</keyword>
<keyword id="KW-0472">Membrane</keyword>
<keyword id="KW-0536">Nodulation</keyword>
<keyword id="KW-0732">Signal</keyword>
<comment type="function">
    <text evidence="7">May act as a carbohydrate transporter.</text>
</comment>
<comment type="subcellular location">
    <subcellularLocation>
        <location evidence="4">Symbiosome</location>
    </subcellularLocation>
    <subcellularLocation>
        <location evidence="1">Cell membrane</location>
        <topology evidence="1">Lipid-anchor</topology>
        <topology evidence="1">GPI-anchor</topology>
    </subcellularLocation>
</comment>
<comment type="tissue specificity">
    <text evidence="5">Expressed in developing nodules upon symbiosis with Sinorhizobium meliloti.</text>
</comment>
<comment type="developmental stage">
    <text evidence="5">Expressed during the early stages of nodule development in cells with growing infection threads upon symbiosis with Sinorhizobium meliloti.</text>
</comment>
<comment type="similarity">
    <text evidence="7">Belongs to the early nodulin-like (ENODL) family.</text>
</comment>
<reference key="1">
    <citation type="journal article" date="1998" name="Plant Mol. Biol.">
        <title>MtENOD16 and 20 are members of a family of phytocyanin-related early nodulins.</title>
        <authorList>
            <person name="Greene E.A."/>
            <person name="Erard M."/>
            <person name="Dedieu A."/>
            <person name="Barker D.G."/>
        </authorList>
    </citation>
    <scope>NUCLEOTIDE SEQUENCE [GENOMIC DNA]</scope>
    <source>
        <strain>cv. Jemalong</strain>
    </source>
</reference>
<reference key="2">
    <citation type="journal article" date="2004" name="Electrophoresis">
        <title>Biochemical characterization of symbiosome membrane proteins from Medicago truncatula root nodules.</title>
        <authorList>
            <person name="Catalano C.M."/>
            <person name="Lane W.S."/>
            <person name="Sherrier D.J."/>
        </authorList>
    </citation>
    <scope>IDENTIFICATION BY MASS SPECTROMETRY</scope>
    <scope>SUBCELLULAR LOCATION</scope>
    <scope>DEVELOPMENTAL STAGE</scope>
    <scope>TISSUE SPECIFICITY</scope>
    <source>
        <strain>cv. Jemalong A17</strain>
    </source>
</reference>
<evidence type="ECO:0000255" key="1"/>
<evidence type="ECO:0000255" key="2">
    <source>
        <dbReference type="PROSITE-ProRule" id="PRU00498"/>
    </source>
</evidence>
<evidence type="ECO:0000255" key="3">
    <source>
        <dbReference type="PROSITE-ProRule" id="PRU00818"/>
    </source>
</evidence>
<evidence type="ECO:0000269" key="4">
    <source>
    </source>
</evidence>
<evidence type="ECO:0000303" key="5">
    <source>
    </source>
</evidence>
<evidence type="ECO:0000303" key="6">
    <source>
    </source>
</evidence>
<evidence type="ECO:0000305" key="7"/>
<dbReference type="EMBL" id="X99466">
    <property type="protein sequence ID" value="CAA67829.1"/>
    <property type="molecule type" value="Genomic_DNA"/>
</dbReference>
<dbReference type="SMR" id="P93328"/>
<dbReference type="PaxDb" id="3880-AES92507"/>
<dbReference type="eggNOG" id="ENOG502SECN">
    <property type="taxonomic scope" value="Eukaryota"/>
</dbReference>
<dbReference type="ExpressionAtlas" id="P93328">
    <property type="expression patterns" value="differential"/>
</dbReference>
<dbReference type="GO" id="GO:0005886">
    <property type="term" value="C:plasma membrane"/>
    <property type="evidence" value="ECO:0007669"/>
    <property type="project" value="UniProtKB-SubCell"/>
</dbReference>
<dbReference type="GO" id="GO:0098552">
    <property type="term" value="C:side of membrane"/>
    <property type="evidence" value="ECO:0007669"/>
    <property type="project" value="UniProtKB-KW"/>
</dbReference>
<dbReference type="GO" id="GO:0043659">
    <property type="term" value="C:symbiosome"/>
    <property type="evidence" value="ECO:0007669"/>
    <property type="project" value="UniProtKB-SubCell"/>
</dbReference>
<dbReference type="GO" id="GO:0009055">
    <property type="term" value="F:electron transfer activity"/>
    <property type="evidence" value="ECO:0007669"/>
    <property type="project" value="InterPro"/>
</dbReference>
<dbReference type="GO" id="GO:0009877">
    <property type="term" value="P:nodulation"/>
    <property type="evidence" value="ECO:0007669"/>
    <property type="project" value="UniProtKB-KW"/>
</dbReference>
<dbReference type="CDD" id="cd04216">
    <property type="entry name" value="Phytocyanin"/>
    <property type="match status" value="1"/>
</dbReference>
<dbReference type="FunFam" id="2.60.40.420:FF:000034">
    <property type="entry name" value="Cupredoxin superfamily protein"/>
    <property type="match status" value="1"/>
</dbReference>
<dbReference type="Gene3D" id="2.60.40.420">
    <property type="entry name" value="Cupredoxins - blue copper proteins"/>
    <property type="match status" value="1"/>
</dbReference>
<dbReference type="InterPro" id="IPR008972">
    <property type="entry name" value="Cupredoxin"/>
</dbReference>
<dbReference type="InterPro" id="IPR039391">
    <property type="entry name" value="Phytocyanin-like"/>
</dbReference>
<dbReference type="InterPro" id="IPR003245">
    <property type="entry name" value="Phytocyanin_dom"/>
</dbReference>
<dbReference type="PANTHER" id="PTHR33021">
    <property type="entry name" value="BLUE COPPER PROTEIN"/>
    <property type="match status" value="1"/>
</dbReference>
<dbReference type="PANTHER" id="PTHR33021:SF519">
    <property type="entry name" value="EARLY NODULIN-LIKE PROTEIN 10"/>
    <property type="match status" value="1"/>
</dbReference>
<dbReference type="Pfam" id="PF02298">
    <property type="entry name" value="Cu_bind_like"/>
    <property type="match status" value="1"/>
</dbReference>
<dbReference type="SUPFAM" id="SSF49503">
    <property type="entry name" value="Cupredoxins"/>
    <property type="match status" value="1"/>
</dbReference>
<dbReference type="PROSITE" id="PS51485">
    <property type="entry name" value="PHYTOCYANIN"/>
    <property type="match status" value="1"/>
</dbReference>